<proteinExistence type="inferred from homology"/>
<keyword id="KW-0067">ATP-binding</keyword>
<keyword id="KW-0436">Ligase</keyword>
<keyword id="KW-0460">Magnesium</keyword>
<keyword id="KW-0479">Metal-binding</keyword>
<keyword id="KW-0520">NAD</keyword>
<keyword id="KW-0547">Nucleotide-binding</keyword>
<feature type="chain" id="PRO_1000099031" description="NH(3)-dependent NAD(+) synthetase">
    <location>
        <begin position="1"/>
        <end position="274"/>
    </location>
</feature>
<feature type="binding site" evidence="1">
    <location>
        <begin position="46"/>
        <end position="53"/>
    </location>
    <ligand>
        <name>ATP</name>
        <dbReference type="ChEBI" id="CHEBI:30616"/>
    </ligand>
</feature>
<feature type="binding site" evidence="1">
    <location>
        <position position="52"/>
    </location>
    <ligand>
        <name>Mg(2+)</name>
        <dbReference type="ChEBI" id="CHEBI:18420"/>
    </ligand>
</feature>
<feature type="binding site" evidence="1">
    <location>
        <position position="140"/>
    </location>
    <ligand>
        <name>deamido-NAD(+)</name>
        <dbReference type="ChEBI" id="CHEBI:58437"/>
    </ligand>
</feature>
<feature type="binding site" evidence="1">
    <location>
        <position position="160"/>
    </location>
    <ligand>
        <name>ATP</name>
        <dbReference type="ChEBI" id="CHEBI:30616"/>
    </ligand>
</feature>
<feature type="binding site" evidence="1">
    <location>
        <position position="165"/>
    </location>
    <ligand>
        <name>Mg(2+)</name>
        <dbReference type="ChEBI" id="CHEBI:18420"/>
    </ligand>
</feature>
<feature type="binding site" evidence="1">
    <location>
        <position position="173"/>
    </location>
    <ligand>
        <name>deamido-NAD(+)</name>
        <dbReference type="ChEBI" id="CHEBI:58437"/>
    </ligand>
</feature>
<feature type="binding site" evidence="1">
    <location>
        <position position="180"/>
    </location>
    <ligand>
        <name>deamido-NAD(+)</name>
        <dbReference type="ChEBI" id="CHEBI:58437"/>
    </ligand>
</feature>
<feature type="binding site" evidence="1">
    <location>
        <position position="189"/>
    </location>
    <ligand>
        <name>ATP</name>
        <dbReference type="ChEBI" id="CHEBI:30616"/>
    </ligand>
</feature>
<feature type="binding site" evidence="1">
    <location>
        <position position="211"/>
    </location>
    <ligand>
        <name>ATP</name>
        <dbReference type="ChEBI" id="CHEBI:30616"/>
    </ligand>
</feature>
<feature type="binding site" evidence="1">
    <location>
        <begin position="260"/>
        <end position="261"/>
    </location>
    <ligand>
        <name>deamido-NAD(+)</name>
        <dbReference type="ChEBI" id="CHEBI:58437"/>
    </ligand>
</feature>
<name>NADE_LYSSC</name>
<organism>
    <name type="scientific">Lysinibacillus sphaericus (strain C3-41)</name>
    <dbReference type="NCBI Taxonomy" id="444177"/>
    <lineage>
        <taxon>Bacteria</taxon>
        <taxon>Bacillati</taxon>
        <taxon>Bacillota</taxon>
        <taxon>Bacilli</taxon>
        <taxon>Bacillales</taxon>
        <taxon>Bacillaceae</taxon>
        <taxon>Lysinibacillus</taxon>
    </lineage>
</organism>
<reference key="1">
    <citation type="journal article" date="2008" name="J. Bacteriol.">
        <title>Complete genome sequence of the mosquitocidal bacterium Bacillus sphaericus C3-41 and comparison with those of closely related Bacillus species.</title>
        <authorList>
            <person name="Hu X."/>
            <person name="Fan W."/>
            <person name="Han B."/>
            <person name="Liu H."/>
            <person name="Zheng D."/>
            <person name="Li Q."/>
            <person name="Dong W."/>
            <person name="Yan J."/>
            <person name="Gao M."/>
            <person name="Berry C."/>
            <person name="Yuan Z."/>
        </authorList>
    </citation>
    <scope>NUCLEOTIDE SEQUENCE [LARGE SCALE GENOMIC DNA]</scope>
    <source>
        <strain>C3-41</strain>
    </source>
</reference>
<gene>
    <name evidence="1" type="primary">nadE</name>
    <name type="ordered locus">Bsph_0188</name>
</gene>
<evidence type="ECO:0000255" key="1">
    <source>
        <dbReference type="HAMAP-Rule" id="MF_00193"/>
    </source>
</evidence>
<dbReference type="EC" id="6.3.1.5" evidence="1"/>
<dbReference type="EMBL" id="CP000817">
    <property type="protein sequence ID" value="ACA37822.1"/>
    <property type="molecule type" value="Genomic_DNA"/>
</dbReference>
<dbReference type="RefSeq" id="WP_012291991.1">
    <property type="nucleotide sequence ID" value="NC_010382.1"/>
</dbReference>
<dbReference type="SMR" id="B1HTT1"/>
<dbReference type="EnsemblBacteria" id="ACA37822">
    <property type="protein sequence ID" value="ACA37822"/>
    <property type="gene ID" value="Bsph_0188"/>
</dbReference>
<dbReference type="KEGG" id="lsp:Bsph_0188"/>
<dbReference type="HOGENOM" id="CLU_059327_3_0_9"/>
<dbReference type="UniPathway" id="UPA00253">
    <property type="reaction ID" value="UER00333"/>
</dbReference>
<dbReference type="Proteomes" id="UP000002164">
    <property type="component" value="Chromosome"/>
</dbReference>
<dbReference type="GO" id="GO:0005737">
    <property type="term" value="C:cytoplasm"/>
    <property type="evidence" value="ECO:0007669"/>
    <property type="project" value="InterPro"/>
</dbReference>
<dbReference type="GO" id="GO:0005524">
    <property type="term" value="F:ATP binding"/>
    <property type="evidence" value="ECO:0007669"/>
    <property type="project" value="UniProtKB-UniRule"/>
</dbReference>
<dbReference type="GO" id="GO:0004359">
    <property type="term" value="F:glutaminase activity"/>
    <property type="evidence" value="ECO:0007669"/>
    <property type="project" value="InterPro"/>
</dbReference>
<dbReference type="GO" id="GO:0046872">
    <property type="term" value="F:metal ion binding"/>
    <property type="evidence" value="ECO:0007669"/>
    <property type="project" value="UniProtKB-KW"/>
</dbReference>
<dbReference type="GO" id="GO:0003952">
    <property type="term" value="F:NAD+ synthase (glutamine-hydrolyzing) activity"/>
    <property type="evidence" value="ECO:0007669"/>
    <property type="project" value="InterPro"/>
</dbReference>
<dbReference type="GO" id="GO:0008795">
    <property type="term" value="F:NAD+ synthase activity"/>
    <property type="evidence" value="ECO:0007669"/>
    <property type="project" value="UniProtKB-UniRule"/>
</dbReference>
<dbReference type="GO" id="GO:0009435">
    <property type="term" value="P:NAD biosynthetic process"/>
    <property type="evidence" value="ECO:0007669"/>
    <property type="project" value="UniProtKB-UniRule"/>
</dbReference>
<dbReference type="CDD" id="cd00553">
    <property type="entry name" value="NAD_synthase"/>
    <property type="match status" value="1"/>
</dbReference>
<dbReference type="FunFam" id="3.40.50.620:FF:000015">
    <property type="entry name" value="NH(3)-dependent NAD(+) synthetase"/>
    <property type="match status" value="1"/>
</dbReference>
<dbReference type="Gene3D" id="3.40.50.620">
    <property type="entry name" value="HUPs"/>
    <property type="match status" value="1"/>
</dbReference>
<dbReference type="HAMAP" id="MF_00193">
    <property type="entry name" value="NadE_ammonia_dep"/>
    <property type="match status" value="1"/>
</dbReference>
<dbReference type="InterPro" id="IPR022310">
    <property type="entry name" value="NAD/GMP_synthase"/>
</dbReference>
<dbReference type="InterPro" id="IPR003694">
    <property type="entry name" value="NAD_synthase"/>
</dbReference>
<dbReference type="InterPro" id="IPR022926">
    <property type="entry name" value="NH(3)-dep_NAD(+)_synth"/>
</dbReference>
<dbReference type="InterPro" id="IPR014729">
    <property type="entry name" value="Rossmann-like_a/b/a_fold"/>
</dbReference>
<dbReference type="NCBIfam" id="TIGR00552">
    <property type="entry name" value="nadE"/>
    <property type="match status" value="1"/>
</dbReference>
<dbReference type="NCBIfam" id="NF001979">
    <property type="entry name" value="PRK00768.1"/>
    <property type="match status" value="1"/>
</dbReference>
<dbReference type="PANTHER" id="PTHR23090">
    <property type="entry name" value="NH 3 /GLUTAMINE-DEPENDENT NAD + SYNTHETASE"/>
    <property type="match status" value="1"/>
</dbReference>
<dbReference type="PANTHER" id="PTHR23090:SF7">
    <property type="entry name" value="NH(3)-DEPENDENT NAD(+) SYNTHETASE"/>
    <property type="match status" value="1"/>
</dbReference>
<dbReference type="Pfam" id="PF02540">
    <property type="entry name" value="NAD_synthase"/>
    <property type="match status" value="1"/>
</dbReference>
<dbReference type="SUPFAM" id="SSF52402">
    <property type="entry name" value="Adenine nucleotide alpha hydrolases-like"/>
    <property type="match status" value="1"/>
</dbReference>
<protein>
    <recommendedName>
        <fullName evidence="1">NH(3)-dependent NAD(+) synthetase</fullName>
        <ecNumber evidence="1">6.3.1.5</ecNumber>
    </recommendedName>
</protein>
<comment type="function">
    <text evidence="1">Catalyzes the ATP-dependent amidation of deamido-NAD to form NAD. Uses ammonia as a nitrogen source.</text>
</comment>
<comment type="catalytic activity">
    <reaction evidence="1">
        <text>deamido-NAD(+) + NH4(+) + ATP = AMP + diphosphate + NAD(+) + H(+)</text>
        <dbReference type="Rhea" id="RHEA:21188"/>
        <dbReference type="ChEBI" id="CHEBI:15378"/>
        <dbReference type="ChEBI" id="CHEBI:28938"/>
        <dbReference type="ChEBI" id="CHEBI:30616"/>
        <dbReference type="ChEBI" id="CHEBI:33019"/>
        <dbReference type="ChEBI" id="CHEBI:57540"/>
        <dbReference type="ChEBI" id="CHEBI:58437"/>
        <dbReference type="ChEBI" id="CHEBI:456215"/>
        <dbReference type="EC" id="6.3.1.5"/>
    </reaction>
</comment>
<comment type="pathway">
    <text evidence="1">Cofactor biosynthesis; NAD(+) biosynthesis; NAD(+) from deamido-NAD(+) (ammonia route): step 1/1.</text>
</comment>
<comment type="subunit">
    <text evidence="1">Homodimer.</text>
</comment>
<comment type="similarity">
    <text evidence="1">Belongs to the NAD synthetase family.</text>
</comment>
<sequence length="274" mass="30830">MTLQQQIIEELRVQPTINAQEEIRKSIDFLKEYAKHYSFVKGFVLGISGGQDSTLTGKLAQLAVDELNKEVGEMKYSFWAIRLPYGVQADEQDCQDAIDYIKPTGSYTVNIKDAVDASVKALANAGVELNDFVKGNEKARERMKVQYSIAAMNGGVVLGTDHAAEAITGFYTKFGDGGADLMPIFRLNKRQGKQLLAELNCPEHLYTKVPTADLEENRPSLPDEVALGVSYDQIDDYLEGKEIPEEPRQLLEGYYLRSQHKRHMPITIFDVFWK</sequence>
<accession>B1HTT1</accession>